<reference key="1">
    <citation type="journal article" date="2002" name="Nature">
        <title>The genome sequence and structure of rice chromosome 1.</title>
        <authorList>
            <person name="Sasaki T."/>
            <person name="Matsumoto T."/>
            <person name="Yamamoto K."/>
            <person name="Sakata K."/>
            <person name="Baba T."/>
            <person name="Katayose Y."/>
            <person name="Wu J."/>
            <person name="Niimura Y."/>
            <person name="Cheng Z."/>
            <person name="Nagamura Y."/>
            <person name="Antonio B.A."/>
            <person name="Kanamori H."/>
            <person name="Hosokawa S."/>
            <person name="Masukawa M."/>
            <person name="Arikawa K."/>
            <person name="Chiden Y."/>
            <person name="Hayashi M."/>
            <person name="Okamoto M."/>
            <person name="Ando T."/>
            <person name="Aoki H."/>
            <person name="Arita K."/>
            <person name="Hamada M."/>
            <person name="Harada C."/>
            <person name="Hijishita S."/>
            <person name="Honda M."/>
            <person name="Ichikawa Y."/>
            <person name="Idonuma A."/>
            <person name="Iijima M."/>
            <person name="Ikeda M."/>
            <person name="Ikeno M."/>
            <person name="Ito S."/>
            <person name="Ito T."/>
            <person name="Ito Y."/>
            <person name="Ito Y."/>
            <person name="Iwabuchi A."/>
            <person name="Kamiya K."/>
            <person name="Karasawa W."/>
            <person name="Katagiri S."/>
            <person name="Kikuta A."/>
            <person name="Kobayashi N."/>
            <person name="Kono I."/>
            <person name="Machita K."/>
            <person name="Maehara T."/>
            <person name="Mizuno H."/>
            <person name="Mizubayashi T."/>
            <person name="Mukai Y."/>
            <person name="Nagasaki H."/>
            <person name="Nakashima M."/>
            <person name="Nakama Y."/>
            <person name="Nakamichi Y."/>
            <person name="Nakamura M."/>
            <person name="Namiki N."/>
            <person name="Negishi M."/>
            <person name="Ohta I."/>
            <person name="Ono N."/>
            <person name="Saji S."/>
            <person name="Sakai K."/>
            <person name="Shibata M."/>
            <person name="Shimokawa T."/>
            <person name="Shomura A."/>
            <person name="Song J."/>
            <person name="Takazaki Y."/>
            <person name="Terasawa K."/>
            <person name="Tsuji K."/>
            <person name="Waki K."/>
            <person name="Yamagata H."/>
            <person name="Yamane H."/>
            <person name="Yoshiki S."/>
            <person name="Yoshihara R."/>
            <person name="Yukawa K."/>
            <person name="Zhong H."/>
            <person name="Iwama H."/>
            <person name="Endo T."/>
            <person name="Ito H."/>
            <person name="Hahn J.H."/>
            <person name="Kim H.-I."/>
            <person name="Eun M.-Y."/>
            <person name="Yano M."/>
            <person name="Jiang J."/>
            <person name="Gojobori T."/>
        </authorList>
    </citation>
    <scope>NUCLEOTIDE SEQUENCE [LARGE SCALE GENOMIC DNA]</scope>
    <source>
        <strain>cv. Nipponbare</strain>
    </source>
</reference>
<reference key="2">
    <citation type="journal article" date="2005" name="Nature">
        <title>The map-based sequence of the rice genome.</title>
        <authorList>
            <consortium name="International rice genome sequencing project (IRGSP)"/>
        </authorList>
    </citation>
    <scope>NUCLEOTIDE SEQUENCE [LARGE SCALE GENOMIC DNA]</scope>
    <source>
        <strain>cv. Nipponbare</strain>
    </source>
</reference>
<reference key="3">
    <citation type="journal article" date="2008" name="Nucleic Acids Res.">
        <title>The rice annotation project database (RAP-DB): 2008 update.</title>
        <authorList>
            <consortium name="The rice annotation project (RAP)"/>
        </authorList>
    </citation>
    <scope>GENOME REANNOTATION</scope>
    <source>
        <strain>cv. Nipponbare</strain>
    </source>
</reference>
<reference key="4">
    <citation type="journal article" date="2013" name="Rice">
        <title>Improvement of the Oryza sativa Nipponbare reference genome using next generation sequence and optical map data.</title>
        <authorList>
            <person name="Kawahara Y."/>
            <person name="de la Bastide M."/>
            <person name="Hamilton J.P."/>
            <person name="Kanamori H."/>
            <person name="McCombie W.R."/>
            <person name="Ouyang S."/>
            <person name="Schwartz D.C."/>
            <person name="Tanaka T."/>
            <person name="Wu J."/>
            <person name="Zhou S."/>
            <person name="Childs K.L."/>
            <person name="Davidson R.M."/>
            <person name="Lin H."/>
            <person name="Quesada-Ocampo L."/>
            <person name="Vaillancourt B."/>
            <person name="Sakai H."/>
            <person name="Lee S.S."/>
            <person name="Kim J."/>
            <person name="Numa H."/>
            <person name="Itoh T."/>
            <person name="Buell C.R."/>
            <person name="Matsumoto T."/>
        </authorList>
    </citation>
    <scope>GENOME REANNOTATION</scope>
    <source>
        <strain>cv. Nipponbare</strain>
    </source>
</reference>
<reference key="5">
    <citation type="journal article" date="2005" name="PLoS Biol.">
        <title>The genomes of Oryza sativa: a history of duplications.</title>
        <authorList>
            <person name="Yu J."/>
            <person name="Wang J."/>
            <person name="Lin W."/>
            <person name="Li S."/>
            <person name="Li H."/>
            <person name="Zhou J."/>
            <person name="Ni P."/>
            <person name="Dong W."/>
            <person name="Hu S."/>
            <person name="Zeng C."/>
            <person name="Zhang J."/>
            <person name="Zhang Y."/>
            <person name="Li R."/>
            <person name="Xu Z."/>
            <person name="Li S."/>
            <person name="Li X."/>
            <person name="Zheng H."/>
            <person name="Cong L."/>
            <person name="Lin L."/>
            <person name="Yin J."/>
            <person name="Geng J."/>
            <person name="Li G."/>
            <person name="Shi J."/>
            <person name="Liu J."/>
            <person name="Lv H."/>
            <person name="Li J."/>
            <person name="Wang J."/>
            <person name="Deng Y."/>
            <person name="Ran L."/>
            <person name="Shi X."/>
            <person name="Wang X."/>
            <person name="Wu Q."/>
            <person name="Li C."/>
            <person name="Ren X."/>
            <person name="Wang J."/>
            <person name="Wang X."/>
            <person name="Li D."/>
            <person name="Liu D."/>
            <person name="Zhang X."/>
            <person name="Ji Z."/>
            <person name="Zhao W."/>
            <person name="Sun Y."/>
            <person name="Zhang Z."/>
            <person name="Bao J."/>
            <person name="Han Y."/>
            <person name="Dong L."/>
            <person name="Ji J."/>
            <person name="Chen P."/>
            <person name="Wu S."/>
            <person name="Liu J."/>
            <person name="Xiao Y."/>
            <person name="Bu D."/>
            <person name="Tan J."/>
            <person name="Yang L."/>
            <person name="Ye C."/>
            <person name="Zhang J."/>
            <person name="Xu J."/>
            <person name="Zhou Y."/>
            <person name="Yu Y."/>
            <person name="Zhang B."/>
            <person name="Zhuang S."/>
            <person name="Wei H."/>
            <person name="Liu B."/>
            <person name="Lei M."/>
            <person name="Yu H."/>
            <person name="Li Y."/>
            <person name="Xu H."/>
            <person name="Wei S."/>
            <person name="He X."/>
            <person name="Fang L."/>
            <person name="Zhang Z."/>
            <person name="Zhang Y."/>
            <person name="Huang X."/>
            <person name="Su Z."/>
            <person name="Tong W."/>
            <person name="Li J."/>
            <person name="Tong Z."/>
            <person name="Li S."/>
            <person name="Ye J."/>
            <person name="Wang L."/>
            <person name="Fang L."/>
            <person name="Lei T."/>
            <person name="Chen C.-S."/>
            <person name="Chen H.-C."/>
            <person name="Xu Z."/>
            <person name="Li H."/>
            <person name="Huang H."/>
            <person name="Zhang F."/>
            <person name="Xu H."/>
            <person name="Li N."/>
            <person name="Zhao C."/>
            <person name="Li S."/>
            <person name="Dong L."/>
            <person name="Huang Y."/>
            <person name="Li L."/>
            <person name="Xi Y."/>
            <person name="Qi Q."/>
            <person name="Li W."/>
            <person name="Zhang B."/>
            <person name="Hu W."/>
            <person name="Zhang Y."/>
            <person name="Tian X."/>
            <person name="Jiao Y."/>
            <person name="Liang X."/>
            <person name="Jin J."/>
            <person name="Gao L."/>
            <person name="Zheng W."/>
            <person name="Hao B."/>
            <person name="Liu S.-M."/>
            <person name="Wang W."/>
            <person name="Yuan L."/>
            <person name="Cao M."/>
            <person name="McDermott J."/>
            <person name="Samudrala R."/>
            <person name="Wang J."/>
            <person name="Wong G.K.-S."/>
            <person name="Yang H."/>
        </authorList>
    </citation>
    <scope>NUCLEOTIDE SEQUENCE [LARGE SCALE GENOMIC DNA]</scope>
    <source>
        <strain>cv. Nipponbare</strain>
    </source>
</reference>
<reference key="6">
    <citation type="submission" date="2006-10" db="EMBL/GenBank/DDBJ databases">
        <title>Oryza sativa full length cDNA.</title>
        <authorList>
            <consortium name="The rice full-length cDNA consortium"/>
        </authorList>
    </citation>
    <scope>NUCLEOTIDE SEQUENCE [LARGE SCALE MRNA]</scope>
    <source>
        <strain>cv. Nipponbare</strain>
    </source>
</reference>
<reference key="7">
    <citation type="journal article" date="2015" name="BMC Genomics">
        <title>The mature anther-preferentially expressed genes are associated with pollen fertility, pollen germination and anther dehiscence in rice.</title>
        <authorList>
            <person name="Ling S."/>
            <person name="Chen C."/>
            <person name="Wang Y."/>
            <person name="Sun X."/>
            <person name="Lu Z."/>
            <person name="Ouyang Y."/>
            <person name="Yao J."/>
        </authorList>
    </citation>
    <scope>DEVELOPMENTAL STAGE</scope>
</reference>
<reference key="8">
    <citation type="journal article" date="2016" name="BMC Plant Biol.">
        <title>Identification and expression analysis of OsLPR family revealed the potential roles of OsLPR3 and 5 in maintaining phosphate homeostasis in rice.</title>
        <authorList>
            <person name="Cao Y."/>
            <person name="Ai H."/>
            <person name="Jain A."/>
            <person name="Wu X."/>
            <person name="Zhang L."/>
            <person name="Pei W."/>
            <person name="Chen A."/>
            <person name="Xu G."/>
            <person name="Sun S."/>
        </authorList>
    </citation>
    <scope>FUNCTION</scope>
    <scope>TISSUE SPECIFICITY</scope>
    <scope>INDUCTION</scope>
    <scope>GENE FAMILY</scope>
    <scope>NOMENCLATURE</scope>
</reference>
<gene>
    <name evidence="8" type="primary">LPR5</name>
    <name evidence="12" type="ordered locus">Os01g0127200</name>
    <name evidence="9" type="ordered locus">LOC_Os01g03640</name>
    <name evidence="13" type="ORF">OsJ_00218</name>
    <name evidence="11" type="ORF">P0409B08.18</name>
</gene>
<sequence length="637" mass="70919">MSPRIQQLAAVLLAAVVVVAAARDEPAAAKNYQTQWDTVMSILNCKSDSLIPSYICSVISKSRWGWASDDPNDDEYTPPDHPLPAPAAGRRRWPVMTSLNLTKYVDSLPRIAKIRGYGIRHGRPVPIKLTIGMYSKTWQFHRDMPPTPVFVYGQSLQTATFPGPTIVARQGVPLAVEWQNHLPDAHILPWDPKVPTAIPKKGGVPTVVHLHGGAHPPEFDGHAFAWFTRDFAENGSTWTRKTYTYPNVQAPGNLWYHDHALGLTRVSLLAGLLAAYVIEKPELEDPMNLPCGDHDLHLVIADREFYTNGSISIDREWKPEYFGLVITVNGKAWPYLSVQRRRYRLRILNASNARYFNVTLSNGALPFTVIGSDSSYLSRPVTVSNLVLSPAEIFDVIVDFSRLPAAMTEIEMLNTAPYPFPNGPNVTDPNLDGKVMLFKVAGKGKVDDMPDKSKVPEHGVPYASVAALPPPTTTRYIVLYENQTAPGNLYINGLRLEDPVTETPKSGTTELWQVINLTGDNHPLHLHIATFQAIKMTKIEGFQVFKDCMIKNNNTATCNLDQHAVGPVVPVPEEEKTWKNAVKIPPEFMTSVVVAFRLVEANQPYPFDATTEPGFVYHCHILDHEDNAMIRPLKLLP</sequence>
<evidence type="ECO:0000250" key="1">
    <source>
        <dbReference type="UniProtKB" id="F4I4K5"/>
    </source>
</evidence>
<evidence type="ECO:0000250" key="2">
    <source>
        <dbReference type="UniProtKB" id="P37064"/>
    </source>
</evidence>
<evidence type="ECO:0000255" key="3"/>
<evidence type="ECO:0000255" key="4">
    <source>
        <dbReference type="PROSITE-ProRule" id="PRU00498"/>
    </source>
</evidence>
<evidence type="ECO:0000269" key="5">
    <source>
    </source>
</evidence>
<evidence type="ECO:0000269" key="6">
    <source>
    </source>
</evidence>
<evidence type="ECO:0000303" key="7">
    <source>
    </source>
</evidence>
<evidence type="ECO:0000303" key="8">
    <source>
    </source>
</evidence>
<evidence type="ECO:0000305" key="9"/>
<evidence type="ECO:0000305" key="10">
    <source>
    </source>
</evidence>
<evidence type="ECO:0000312" key="11">
    <source>
        <dbReference type="EMBL" id="BAD52545.1"/>
    </source>
</evidence>
<evidence type="ECO:0000312" key="12">
    <source>
        <dbReference type="EMBL" id="BAS70182.1"/>
    </source>
</evidence>
<evidence type="ECO:0000312" key="13">
    <source>
        <dbReference type="EMBL" id="EAZ10382.1"/>
    </source>
</evidence>
<organism>
    <name type="scientific">Oryza sativa subsp. japonica</name>
    <name type="common">Rice</name>
    <dbReference type="NCBI Taxonomy" id="39947"/>
    <lineage>
        <taxon>Eukaryota</taxon>
        <taxon>Viridiplantae</taxon>
        <taxon>Streptophyta</taxon>
        <taxon>Embryophyta</taxon>
        <taxon>Tracheophyta</taxon>
        <taxon>Spermatophyta</taxon>
        <taxon>Magnoliopsida</taxon>
        <taxon>Liliopsida</taxon>
        <taxon>Poales</taxon>
        <taxon>Poaceae</taxon>
        <taxon>BOP clade</taxon>
        <taxon>Oryzoideae</taxon>
        <taxon>Oryzeae</taxon>
        <taxon>Oryzinae</taxon>
        <taxon>Oryza</taxon>
        <taxon>Oryza sativa</taxon>
    </lineage>
</organism>
<comment type="function">
    <text evidence="10">Multicopper oxidase that may play a role in the maintenance of inorganic phosphate homeostasis.</text>
</comment>
<comment type="cofactor">
    <cofactor evidence="2">
        <name>Cu cation</name>
        <dbReference type="ChEBI" id="CHEBI:23378"/>
    </cofactor>
    <text evidence="2">Binds 4 Cu cations per monomer. The Cu cations are bound as 3 distinct Cu centers known as type 1 or blue, type 2 or normal, and type 3 or coupled binuclear.</text>
</comment>
<comment type="subcellular location">
    <subcellularLocation>
        <location evidence="1">Endoplasmic reticulum membrane</location>
        <topology evidence="1">Peripheral membrane protein</topology>
    </subcellularLocation>
</comment>
<comment type="tissue specificity">
    <text evidence="6">Highly expressed in roots and basal stems.</text>
</comment>
<comment type="developmental stage">
    <text evidence="5">During flowering, preferentially expressed in mature anthers.</text>
</comment>
<comment type="induction">
    <text evidence="6">Induced by phosphate deficiency.</text>
</comment>
<comment type="similarity">
    <text evidence="9">Belongs to the multicopper oxidase family.</text>
</comment>
<comment type="sequence caution" evidence="9">
    <conflict type="erroneous gene model prediction">
        <sequence resource="EMBL-CDS" id="BAD52545"/>
    </conflict>
</comment>
<comment type="sequence caution" evidence="9">
    <conflict type="erroneous gene model prediction">
        <sequence resource="EMBL-CDS" id="BAH90887"/>
    </conflict>
</comment>
<keyword id="KW-0186">Copper</keyword>
<keyword id="KW-0256">Endoplasmic reticulum</keyword>
<keyword id="KW-0325">Glycoprotein</keyword>
<keyword id="KW-0472">Membrane</keyword>
<keyword id="KW-0479">Metal-binding</keyword>
<keyword id="KW-0560">Oxidoreductase</keyword>
<keyword id="KW-1185">Reference proteome</keyword>
<keyword id="KW-0732">Signal</keyword>
<accession>A2ZNT5</accession>
<accession>Q5ZDZ9</accession>
<dbReference type="EC" id="1.-.-.-" evidence="9"/>
<dbReference type="EMBL" id="AP002860">
    <property type="protein sequence ID" value="BAD52545.1"/>
    <property type="status" value="ALT_SEQ"/>
    <property type="molecule type" value="Genomic_DNA"/>
</dbReference>
<dbReference type="EMBL" id="AP008207">
    <property type="protein sequence ID" value="BAH90887.1"/>
    <property type="status" value="ALT_SEQ"/>
    <property type="molecule type" value="Genomic_DNA"/>
</dbReference>
<dbReference type="EMBL" id="AP014957">
    <property type="protein sequence ID" value="BAS70182.1"/>
    <property type="molecule type" value="Genomic_DNA"/>
</dbReference>
<dbReference type="EMBL" id="CM000138">
    <property type="protein sequence ID" value="EAZ10382.1"/>
    <property type="molecule type" value="Genomic_DNA"/>
</dbReference>
<dbReference type="EMBL" id="AK243237">
    <property type="protein sequence ID" value="BAH01498.1"/>
    <property type="molecule type" value="mRNA"/>
</dbReference>
<dbReference type="RefSeq" id="XP_015641597.1">
    <property type="nucleotide sequence ID" value="XM_015786111.1"/>
</dbReference>
<dbReference type="SMR" id="A2ZNT5"/>
<dbReference type="STRING" id="39947.A2ZNT5"/>
<dbReference type="GlyCosmos" id="A2ZNT5">
    <property type="glycosylation" value="9 sites, No reported glycans"/>
</dbReference>
<dbReference type="PaxDb" id="39947-A2ZNT5"/>
<dbReference type="EnsemblPlants" id="Os01t0127200-01">
    <property type="protein sequence ID" value="Os01t0127200-01"/>
    <property type="gene ID" value="Os01g0127200"/>
</dbReference>
<dbReference type="Gramene" id="Os01t0127200-01">
    <property type="protein sequence ID" value="Os01t0127200-01"/>
    <property type="gene ID" value="Os01g0127200"/>
</dbReference>
<dbReference type="KEGG" id="dosa:Os01g0127200"/>
<dbReference type="eggNOG" id="ENOG502QR4X">
    <property type="taxonomic scope" value="Eukaryota"/>
</dbReference>
<dbReference type="HOGENOM" id="CLU_009100_4_0_1"/>
<dbReference type="InParanoid" id="A2ZNT5"/>
<dbReference type="OMA" id="AYVIREP"/>
<dbReference type="OrthoDB" id="262547at2759"/>
<dbReference type="Proteomes" id="UP000000763">
    <property type="component" value="Chromosome 1"/>
</dbReference>
<dbReference type="Proteomes" id="UP000007752">
    <property type="component" value="Chromosome 1"/>
</dbReference>
<dbReference type="Proteomes" id="UP000059680">
    <property type="component" value="Chromosome 1"/>
</dbReference>
<dbReference type="GO" id="GO:0005789">
    <property type="term" value="C:endoplasmic reticulum membrane"/>
    <property type="evidence" value="ECO:0007669"/>
    <property type="project" value="UniProtKB-SubCell"/>
</dbReference>
<dbReference type="GO" id="GO:0005507">
    <property type="term" value="F:copper ion binding"/>
    <property type="evidence" value="ECO:0007669"/>
    <property type="project" value="InterPro"/>
</dbReference>
<dbReference type="GO" id="GO:0016491">
    <property type="term" value="F:oxidoreductase activity"/>
    <property type="evidence" value="ECO:0000318"/>
    <property type="project" value="GO_Central"/>
</dbReference>
<dbReference type="GO" id="GO:0016036">
    <property type="term" value="P:cellular response to phosphate starvation"/>
    <property type="evidence" value="ECO:0007669"/>
    <property type="project" value="InterPro"/>
</dbReference>
<dbReference type="CDD" id="cd13844">
    <property type="entry name" value="CuRO_1_BOD_CotA_like"/>
    <property type="match status" value="1"/>
</dbReference>
<dbReference type="CDD" id="cd13868">
    <property type="entry name" value="CuRO_2_CotA_like"/>
    <property type="match status" value="1"/>
</dbReference>
<dbReference type="Gene3D" id="2.60.40.420">
    <property type="entry name" value="Cupredoxins - blue copper proteins"/>
    <property type="match status" value="3"/>
</dbReference>
<dbReference type="InterPro" id="IPR011707">
    <property type="entry name" value="Cu-oxidase-like_N"/>
</dbReference>
<dbReference type="InterPro" id="IPR001117">
    <property type="entry name" value="Cu-oxidase_2nd"/>
</dbReference>
<dbReference type="InterPro" id="IPR011706">
    <property type="entry name" value="Cu-oxidase_C"/>
</dbReference>
<dbReference type="InterPro" id="IPR002355">
    <property type="entry name" value="Cu_oxidase_Cu_BS"/>
</dbReference>
<dbReference type="InterPro" id="IPR008972">
    <property type="entry name" value="Cupredoxin"/>
</dbReference>
<dbReference type="InterPro" id="IPR052152">
    <property type="entry name" value="LPR1/LPR2"/>
</dbReference>
<dbReference type="PANTHER" id="PTHR48461">
    <property type="entry name" value="MULTICOPPER OXIDASE LPR1-LIKE"/>
    <property type="match status" value="1"/>
</dbReference>
<dbReference type="PANTHER" id="PTHR48461:SF1">
    <property type="entry name" value="MULTICOPPER OXIDASE LPR1-LIKE"/>
    <property type="match status" value="1"/>
</dbReference>
<dbReference type="Pfam" id="PF00394">
    <property type="entry name" value="Cu-oxidase"/>
    <property type="match status" value="1"/>
</dbReference>
<dbReference type="Pfam" id="PF07731">
    <property type="entry name" value="Cu-oxidase_2"/>
    <property type="match status" value="1"/>
</dbReference>
<dbReference type="Pfam" id="PF07732">
    <property type="entry name" value="Cu-oxidase_3"/>
    <property type="match status" value="1"/>
</dbReference>
<dbReference type="SUPFAM" id="SSF49503">
    <property type="entry name" value="Cupredoxins"/>
    <property type="match status" value="3"/>
</dbReference>
<dbReference type="PROSITE" id="PS00080">
    <property type="entry name" value="MULTICOPPER_OXIDASE2"/>
    <property type="match status" value="1"/>
</dbReference>
<protein>
    <recommendedName>
        <fullName evidence="9">Multicopper oxidase LPR1 homolog 5</fullName>
        <ecNumber evidence="9">1.-.-.-</ecNumber>
    </recommendedName>
    <alternativeName>
        <fullName evidence="7">OsSTA2</fullName>
    </alternativeName>
</protein>
<feature type="signal peptide" evidence="3">
    <location>
        <begin position="1"/>
        <end position="21"/>
    </location>
</feature>
<feature type="chain" id="PRO_5008947074" description="Multicopper oxidase LPR1 homolog 5">
    <location>
        <begin position="22"/>
        <end position="637"/>
    </location>
</feature>
<feature type="domain" description="Plastocyanin-like" evidence="3">
    <location>
        <begin position="334"/>
        <end position="406"/>
    </location>
</feature>
<feature type="binding site" description="type 2 copper site" evidence="2">
    <location>
        <position position="209"/>
    </location>
    <ligand>
        <name>Cu cation</name>
        <dbReference type="ChEBI" id="CHEBI:23378"/>
        <label>1</label>
    </ligand>
</feature>
<feature type="binding site" description="type 3 copper site" evidence="2">
    <location>
        <position position="211"/>
    </location>
    <ligand>
        <name>Cu cation</name>
        <dbReference type="ChEBI" id="CHEBI:23378"/>
        <label>2</label>
    </ligand>
</feature>
<feature type="binding site" description="type 3 copper site" evidence="2">
    <location>
        <position position="257"/>
    </location>
    <ligand>
        <name>Cu cation</name>
        <dbReference type="ChEBI" id="CHEBI:23378"/>
        <label>2</label>
    </ligand>
</feature>
<feature type="binding site" description="type 3 copper site" evidence="2">
    <location>
        <position position="259"/>
    </location>
    <ligand>
        <name>Cu cation</name>
        <dbReference type="ChEBI" id="CHEBI:23378"/>
        <label>3</label>
    </ligand>
</feature>
<feature type="binding site" description="type 1 copper site" evidence="2">
    <location>
        <position position="522"/>
    </location>
    <ligand>
        <name>Cu cation</name>
        <dbReference type="ChEBI" id="CHEBI:23378"/>
        <label>4</label>
    </ligand>
</feature>
<feature type="binding site" description="type 2 copper site" evidence="2">
    <location>
        <position position="525"/>
    </location>
    <ligand>
        <name>Cu cation</name>
        <dbReference type="ChEBI" id="CHEBI:23378"/>
        <label>1</label>
    </ligand>
</feature>
<feature type="binding site" description="type 3 copper site" evidence="2">
    <location>
        <position position="527"/>
    </location>
    <ligand>
        <name>Cu cation</name>
        <dbReference type="ChEBI" id="CHEBI:23378"/>
        <label>3</label>
    </ligand>
</feature>
<feature type="binding site" description="type 3 copper site" evidence="2">
    <location>
        <position position="618"/>
    </location>
    <ligand>
        <name>Cu cation</name>
        <dbReference type="ChEBI" id="CHEBI:23378"/>
        <label>3</label>
    </ligand>
</feature>
<feature type="binding site" description="type 1 copper site" evidence="2">
    <location>
        <position position="619"/>
    </location>
    <ligand>
        <name>Cu cation</name>
        <dbReference type="ChEBI" id="CHEBI:23378"/>
        <label>4</label>
    </ligand>
</feature>
<feature type="binding site" description="type 3 copper site" evidence="2">
    <location>
        <position position="620"/>
    </location>
    <ligand>
        <name>Cu cation</name>
        <dbReference type="ChEBI" id="CHEBI:23378"/>
        <label>2</label>
    </ligand>
</feature>
<feature type="binding site" description="type 1 copper site" evidence="2">
    <location>
        <position position="624"/>
    </location>
    <ligand>
        <name>Cu cation</name>
        <dbReference type="ChEBI" id="CHEBI:23378"/>
        <label>4</label>
    </ligand>
</feature>
<feature type="binding site" description="type 1 copper site" evidence="2">
    <location>
        <position position="629"/>
    </location>
    <ligand>
        <name>Cu cation</name>
        <dbReference type="ChEBI" id="CHEBI:23378"/>
        <label>4</label>
    </ligand>
</feature>
<feature type="glycosylation site" description="N-linked (GlcNAc...) asparagine" evidence="4">
    <location>
        <position position="100"/>
    </location>
</feature>
<feature type="glycosylation site" description="N-linked (GlcNAc...) asparagine" evidence="4">
    <location>
        <position position="234"/>
    </location>
</feature>
<feature type="glycosylation site" description="N-linked (GlcNAc...) asparagine" evidence="4">
    <location>
        <position position="308"/>
    </location>
</feature>
<feature type="glycosylation site" description="N-linked (GlcNAc...) asparagine" evidence="4">
    <location>
        <position position="349"/>
    </location>
</feature>
<feature type="glycosylation site" description="N-linked (GlcNAc...) asparagine" evidence="4">
    <location>
        <position position="357"/>
    </location>
</feature>
<feature type="glycosylation site" description="N-linked (GlcNAc...) asparagine" evidence="4">
    <location>
        <position position="425"/>
    </location>
</feature>
<feature type="glycosylation site" description="N-linked (GlcNAc...) asparagine" evidence="4">
    <location>
        <position position="482"/>
    </location>
</feature>
<feature type="glycosylation site" description="N-linked (GlcNAc...) asparagine" evidence="4">
    <location>
        <position position="516"/>
    </location>
</feature>
<feature type="glycosylation site" description="N-linked (GlcNAc...) asparagine" evidence="4">
    <location>
        <position position="553"/>
    </location>
</feature>
<proteinExistence type="evidence at transcript level"/>
<name>LPR5_ORYSJ</name>